<organism>
    <name type="scientific">Eremothecium gossypii (strain ATCC 10895 / CBS 109.51 / FGSC 9923 / NRRL Y-1056)</name>
    <name type="common">Yeast</name>
    <name type="synonym">Ashbya gossypii</name>
    <dbReference type="NCBI Taxonomy" id="284811"/>
    <lineage>
        <taxon>Eukaryota</taxon>
        <taxon>Fungi</taxon>
        <taxon>Dikarya</taxon>
        <taxon>Ascomycota</taxon>
        <taxon>Saccharomycotina</taxon>
        <taxon>Saccharomycetes</taxon>
        <taxon>Saccharomycetales</taxon>
        <taxon>Saccharomycetaceae</taxon>
        <taxon>Eremothecium</taxon>
    </lineage>
</organism>
<keyword id="KW-0067">ATP-binding</keyword>
<keyword id="KW-0507">mRNA processing</keyword>
<keyword id="KW-0547">Nucleotide-binding</keyword>
<keyword id="KW-0539">Nucleus</keyword>
<keyword id="KW-1185">Reference proteome</keyword>
<feature type="chain" id="PRO_0000375191" description="mRNA cleavage and polyadenylation factor CLP1">
    <location>
        <begin position="1"/>
        <end position="445"/>
    </location>
</feature>
<feature type="binding site" evidence="1">
    <location>
        <position position="33"/>
    </location>
    <ligand>
        <name>ATP</name>
        <dbReference type="ChEBI" id="CHEBI:30616"/>
    </ligand>
</feature>
<feature type="binding site" evidence="1">
    <location>
        <begin position="131"/>
        <end position="136"/>
    </location>
    <ligand>
        <name>ATP</name>
        <dbReference type="ChEBI" id="CHEBI:30616"/>
    </ligand>
</feature>
<comment type="function">
    <text evidence="1">Required for endonucleolytic cleavage during polyadenylation-dependent pre-mRNA 3'-end formation.</text>
</comment>
<comment type="subunit">
    <text evidence="1">Component of a pre-mRNA cleavage factor complex. Interacts directly with PCF11.</text>
</comment>
<comment type="subcellular location">
    <subcellularLocation>
        <location evidence="1">Nucleus</location>
    </subcellularLocation>
</comment>
<comment type="similarity">
    <text evidence="1">Belongs to the Clp1 family. Clp1 subfamily.</text>
</comment>
<comment type="caution">
    <text evidence="2">May lack the polyribonucleotide 5'-hydroxyl-kinase and polynucleotide 5'-hydroxyl-kinase activities that are characteristic of the human ortholog.</text>
</comment>
<reference key="1">
    <citation type="journal article" date="2004" name="Science">
        <title>The Ashbya gossypii genome as a tool for mapping the ancient Saccharomyces cerevisiae genome.</title>
        <authorList>
            <person name="Dietrich F.S."/>
            <person name="Voegeli S."/>
            <person name="Brachat S."/>
            <person name="Lerch A."/>
            <person name="Gates K."/>
            <person name="Steiner S."/>
            <person name="Mohr C."/>
            <person name="Poehlmann R."/>
            <person name="Luedi P."/>
            <person name="Choi S."/>
            <person name="Wing R.A."/>
            <person name="Flavier A."/>
            <person name="Gaffney T.D."/>
            <person name="Philippsen P."/>
        </authorList>
    </citation>
    <scope>NUCLEOTIDE SEQUENCE [LARGE SCALE GENOMIC DNA]</scope>
    <source>
        <strain>ATCC 10895 / CBS 109.51 / FGSC 9923 / NRRL Y-1056</strain>
    </source>
</reference>
<reference key="2">
    <citation type="journal article" date="2013" name="G3 (Bethesda)">
        <title>Genomes of Ashbya fungi isolated from insects reveal four mating-type loci, numerous translocations, lack of transposons, and distinct gene duplications.</title>
        <authorList>
            <person name="Dietrich F.S."/>
            <person name="Voegeli S."/>
            <person name="Kuo S."/>
            <person name="Philippsen P."/>
        </authorList>
    </citation>
    <scope>GENOME REANNOTATION</scope>
    <source>
        <strain>ATCC 10895 / CBS 109.51 / FGSC 9923 / NRRL Y-1056</strain>
    </source>
</reference>
<dbReference type="EMBL" id="AE016814">
    <property type="protein sequence ID" value="AAS50271.1"/>
    <property type="molecule type" value="Genomic_DNA"/>
</dbReference>
<dbReference type="RefSeq" id="NP_982447.1">
    <property type="nucleotide sequence ID" value="NM_207800.1"/>
</dbReference>
<dbReference type="SMR" id="Q75F23"/>
<dbReference type="FunCoup" id="Q75F23">
    <property type="interactions" value="860"/>
</dbReference>
<dbReference type="STRING" id="284811.Q75F23"/>
<dbReference type="EnsemblFungi" id="AAS50271">
    <property type="protein sequence ID" value="AAS50271"/>
    <property type="gene ID" value="AGOS_AAL095W"/>
</dbReference>
<dbReference type="GeneID" id="4618653"/>
<dbReference type="KEGG" id="ago:AGOS_AAL095W"/>
<dbReference type="eggNOG" id="KOG2749">
    <property type="taxonomic scope" value="Eukaryota"/>
</dbReference>
<dbReference type="HOGENOM" id="CLU_018195_3_0_1"/>
<dbReference type="InParanoid" id="Q75F23"/>
<dbReference type="OMA" id="VQYVNCH"/>
<dbReference type="OrthoDB" id="258143at2759"/>
<dbReference type="Proteomes" id="UP000000591">
    <property type="component" value="Chromosome I"/>
</dbReference>
<dbReference type="GO" id="GO:0005849">
    <property type="term" value="C:mRNA cleavage factor complex"/>
    <property type="evidence" value="ECO:0007669"/>
    <property type="project" value="UniProtKB-UniRule"/>
</dbReference>
<dbReference type="GO" id="GO:0005634">
    <property type="term" value="C:nucleus"/>
    <property type="evidence" value="ECO:0000318"/>
    <property type="project" value="GO_Central"/>
</dbReference>
<dbReference type="GO" id="GO:0005524">
    <property type="term" value="F:ATP binding"/>
    <property type="evidence" value="ECO:0007669"/>
    <property type="project" value="UniProtKB-UniRule"/>
</dbReference>
<dbReference type="GO" id="GO:0051731">
    <property type="term" value="F:polynucleotide 5'-hydroxyl-kinase activity"/>
    <property type="evidence" value="ECO:0000318"/>
    <property type="project" value="GO_Central"/>
</dbReference>
<dbReference type="GO" id="GO:0003723">
    <property type="term" value="F:RNA binding"/>
    <property type="evidence" value="ECO:0007669"/>
    <property type="project" value="EnsemblFungi"/>
</dbReference>
<dbReference type="GO" id="GO:0031124">
    <property type="term" value="P:mRNA 3'-end processing"/>
    <property type="evidence" value="ECO:0007669"/>
    <property type="project" value="UniProtKB-UniRule"/>
</dbReference>
<dbReference type="GO" id="GO:0006388">
    <property type="term" value="P:tRNA splicing, via endonucleolytic cleavage and ligation"/>
    <property type="evidence" value="ECO:0000318"/>
    <property type="project" value="GO_Central"/>
</dbReference>
<dbReference type="Gene3D" id="2.60.120.1030">
    <property type="entry name" value="Clp1, DNA binding domain"/>
    <property type="match status" value="1"/>
</dbReference>
<dbReference type="Gene3D" id="3.40.50.300">
    <property type="entry name" value="P-loop containing nucleotide triphosphate hydrolases"/>
    <property type="match status" value="1"/>
</dbReference>
<dbReference type="Gene3D" id="2.40.30.330">
    <property type="entry name" value="Pre-mRNA cleavage complex subunit Clp1, C-terminal domain"/>
    <property type="match status" value="1"/>
</dbReference>
<dbReference type="HAMAP" id="MF_03035">
    <property type="entry name" value="Clp1"/>
    <property type="match status" value="1"/>
</dbReference>
<dbReference type="InterPro" id="IPR028606">
    <property type="entry name" value="Clp1"/>
</dbReference>
<dbReference type="InterPro" id="IPR045116">
    <property type="entry name" value="Clp1/Grc3"/>
</dbReference>
<dbReference type="InterPro" id="IPR010655">
    <property type="entry name" value="Clp1_C"/>
</dbReference>
<dbReference type="InterPro" id="IPR038238">
    <property type="entry name" value="Clp1_C_sf"/>
</dbReference>
<dbReference type="InterPro" id="IPR032324">
    <property type="entry name" value="Clp1_N"/>
</dbReference>
<dbReference type="InterPro" id="IPR038239">
    <property type="entry name" value="Clp1_N_sf"/>
</dbReference>
<dbReference type="InterPro" id="IPR032319">
    <property type="entry name" value="CLP1_P"/>
</dbReference>
<dbReference type="InterPro" id="IPR027417">
    <property type="entry name" value="P-loop_NTPase"/>
</dbReference>
<dbReference type="PANTHER" id="PTHR12755">
    <property type="entry name" value="CLEAVAGE/POLYADENYLATION FACTOR IA SUBUNIT CLP1P"/>
    <property type="match status" value="1"/>
</dbReference>
<dbReference type="PANTHER" id="PTHR12755:SF6">
    <property type="entry name" value="POLYRIBONUCLEOTIDE 5'-HYDROXYL-KINASE CLP1"/>
    <property type="match status" value="1"/>
</dbReference>
<dbReference type="Pfam" id="PF06807">
    <property type="entry name" value="Clp1"/>
    <property type="match status" value="1"/>
</dbReference>
<dbReference type="Pfam" id="PF16573">
    <property type="entry name" value="CLP1_N"/>
    <property type="match status" value="1"/>
</dbReference>
<dbReference type="Pfam" id="PF16575">
    <property type="entry name" value="CLP1_P"/>
    <property type="match status" value="1"/>
</dbReference>
<dbReference type="SUPFAM" id="SSF52540">
    <property type="entry name" value="P-loop containing nucleoside triphosphate hydrolases"/>
    <property type="match status" value="1"/>
</dbReference>
<evidence type="ECO:0000255" key="1">
    <source>
        <dbReference type="HAMAP-Rule" id="MF_03035"/>
    </source>
</evidence>
<evidence type="ECO:0000305" key="2"/>
<gene>
    <name evidence="1" type="primary">CLP1</name>
    <name type="ordered locus">AAL095W</name>
</gene>
<proteinExistence type="inferred from homology"/>
<sequence>MSAIQSTQELLQPIGFDTPVAESKTVLLSPGKEWRARIPAESKLTIKIVYGIAELFGTELANGVEYTIQCANIAVYSVDHVKLEWKSLDELETTVSPDTNMPYLYNLHFALEKMRLSSFDGPRILVVGKASSGKTSLCKILCSYALKSKAYTPIYVNLNPQEGAFSPPGFLTATPISDILDVESTMWGQSMTTGATKLHNKQPMVKNFGLEMIAENRPLYMEVLGQLAQTVDGRLKNDPLVRRSGVIVDSPPLQHLDESYTELEVAITKFNIKTLVVCAPDDSLAVELSDRFQTLVRSIVRIPTSRGICNIDDVARRALQRSQIREYFYGNGSTVLSPYTIGVDLLDAVVWRPKSSLTIDMSKTSPNMVELERVEVTAANLQHALVAITYAPRKSTAEEVFRSGVLGVALITEVNDAKRKMRILLPVPGRLPDKAMILTAYRYLE</sequence>
<name>CLP1_EREGS</name>
<accession>Q75F23</accession>
<protein>
    <recommendedName>
        <fullName evidence="1">mRNA cleavage and polyadenylation factor CLP1</fullName>
    </recommendedName>
</protein>